<gene>
    <name evidence="1" type="primary">ndk</name>
    <name type="ordered locus">BAV2347</name>
</gene>
<feature type="chain" id="PRO_0000242494" description="Nucleoside diphosphate kinase">
    <location>
        <begin position="1"/>
        <end position="141"/>
    </location>
</feature>
<feature type="active site" description="Pros-phosphohistidine intermediate" evidence="1">
    <location>
        <position position="117"/>
    </location>
</feature>
<feature type="binding site" evidence="1">
    <location>
        <position position="11"/>
    </location>
    <ligand>
        <name>ATP</name>
        <dbReference type="ChEBI" id="CHEBI:30616"/>
    </ligand>
</feature>
<feature type="binding site" evidence="1">
    <location>
        <position position="59"/>
    </location>
    <ligand>
        <name>ATP</name>
        <dbReference type="ChEBI" id="CHEBI:30616"/>
    </ligand>
</feature>
<feature type="binding site" evidence="1">
    <location>
        <position position="87"/>
    </location>
    <ligand>
        <name>ATP</name>
        <dbReference type="ChEBI" id="CHEBI:30616"/>
    </ligand>
</feature>
<feature type="binding site" evidence="1">
    <location>
        <position position="93"/>
    </location>
    <ligand>
        <name>ATP</name>
        <dbReference type="ChEBI" id="CHEBI:30616"/>
    </ligand>
</feature>
<feature type="binding site" evidence="1">
    <location>
        <position position="104"/>
    </location>
    <ligand>
        <name>ATP</name>
        <dbReference type="ChEBI" id="CHEBI:30616"/>
    </ligand>
</feature>
<feature type="binding site" evidence="1">
    <location>
        <position position="114"/>
    </location>
    <ligand>
        <name>ATP</name>
        <dbReference type="ChEBI" id="CHEBI:30616"/>
    </ligand>
</feature>
<comment type="function">
    <text evidence="1">Major role in the synthesis of nucleoside triphosphates other than ATP. The ATP gamma phosphate is transferred to the NDP beta phosphate via a ping-pong mechanism, using a phosphorylated active-site intermediate.</text>
</comment>
<comment type="catalytic activity">
    <reaction evidence="1">
        <text>a 2'-deoxyribonucleoside 5'-diphosphate + ATP = a 2'-deoxyribonucleoside 5'-triphosphate + ADP</text>
        <dbReference type="Rhea" id="RHEA:44640"/>
        <dbReference type="ChEBI" id="CHEBI:30616"/>
        <dbReference type="ChEBI" id="CHEBI:61560"/>
        <dbReference type="ChEBI" id="CHEBI:73316"/>
        <dbReference type="ChEBI" id="CHEBI:456216"/>
        <dbReference type="EC" id="2.7.4.6"/>
    </reaction>
</comment>
<comment type="catalytic activity">
    <reaction evidence="1">
        <text>a ribonucleoside 5'-diphosphate + ATP = a ribonucleoside 5'-triphosphate + ADP</text>
        <dbReference type="Rhea" id="RHEA:18113"/>
        <dbReference type="ChEBI" id="CHEBI:30616"/>
        <dbReference type="ChEBI" id="CHEBI:57930"/>
        <dbReference type="ChEBI" id="CHEBI:61557"/>
        <dbReference type="ChEBI" id="CHEBI:456216"/>
        <dbReference type="EC" id="2.7.4.6"/>
    </reaction>
</comment>
<comment type="cofactor">
    <cofactor evidence="1">
        <name>Mg(2+)</name>
        <dbReference type="ChEBI" id="CHEBI:18420"/>
    </cofactor>
</comment>
<comment type="subunit">
    <text evidence="1">Homotetramer.</text>
</comment>
<comment type="subcellular location">
    <subcellularLocation>
        <location evidence="1">Cytoplasm</location>
    </subcellularLocation>
</comment>
<comment type="similarity">
    <text evidence="1">Belongs to the NDK family.</text>
</comment>
<accession>Q2KY86</accession>
<sequence length="141" mass="15423">MSIQRTLSIIKPDAVAKNVIGQIVARFEQAGLKVIAARLQQLSRADAERFYAVHKERPFFKDLVDFMVSGPVFVQVLEGENAIQVNRDLMGATDPKKAAPGTIRADFADSIDANAVHGSDAPETAAVEVAFFFPEINIHSR</sequence>
<organism>
    <name type="scientific">Bordetella avium (strain 197N)</name>
    <dbReference type="NCBI Taxonomy" id="360910"/>
    <lineage>
        <taxon>Bacteria</taxon>
        <taxon>Pseudomonadati</taxon>
        <taxon>Pseudomonadota</taxon>
        <taxon>Betaproteobacteria</taxon>
        <taxon>Burkholderiales</taxon>
        <taxon>Alcaligenaceae</taxon>
        <taxon>Bordetella</taxon>
    </lineage>
</organism>
<evidence type="ECO:0000255" key="1">
    <source>
        <dbReference type="HAMAP-Rule" id="MF_00451"/>
    </source>
</evidence>
<proteinExistence type="inferred from homology"/>
<reference key="1">
    <citation type="journal article" date="2006" name="J. Bacteriol.">
        <title>Comparison of the genome sequence of the poultry pathogen Bordetella avium with those of B. bronchiseptica, B. pertussis, and B. parapertussis reveals extensive diversity in surface structures associated with host interaction.</title>
        <authorList>
            <person name="Sebaihia M."/>
            <person name="Preston A."/>
            <person name="Maskell D.J."/>
            <person name="Kuzmiak H."/>
            <person name="Connell T.D."/>
            <person name="King N.D."/>
            <person name="Orndorff P.E."/>
            <person name="Miyamoto D.M."/>
            <person name="Thomson N.R."/>
            <person name="Harris D."/>
            <person name="Goble A."/>
            <person name="Lord A."/>
            <person name="Murphy L."/>
            <person name="Quail M.A."/>
            <person name="Rutter S."/>
            <person name="Squares R."/>
            <person name="Squares S."/>
            <person name="Woodward J."/>
            <person name="Parkhill J."/>
            <person name="Temple L.M."/>
        </authorList>
    </citation>
    <scope>NUCLEOTIDE SEQUENCE [LARGE SCALE GENOMIC DNA]</scope>
    <source>
        <strain>197N</strain>
    </source>
</reference>
<protein>
    <recommendedName>
        <fullName evidence="1">Nucleoside diphosphate kinase</fullName>
        <shortName evidence="1">NDK</shortName>
        <shortName evidence="1">NDP kinase</shortName>
        <ecNumber evidence="1">2.7.4.6</ecNumber>
    </recommendedName>
    <alternativeName>
        <fullName evidence="1">Nucleoside-2-P kinase</fullName>
    </alternativeName>
</protein>
<keyword id="KW-0067">ATP-binding</keyword>
<keyword id="KW-0963">Cytoplasm</keyword>
<keyword id="KW-0418">Kinase</keyword>
<keyword id="KW-0460">Magnesium</keyword>
<keyword id="KW-0479">Metal-binding</keyword>
<keyword id="KW-0546">Nucleotide metabolism</keyword>
<keyword id="KW-0547">Nucleotide-binding</keyword>
<keyword id="KW-0597">Phosphoprotein</keyword>
<keyword id="KW-1185">Reference proteome</keyword>
<keyword id="KW-0808">Transferase</keyword>
<name>NDK_BORA1</name>
<dbReference type="EC" id="2.7.4.6" evidence="1"/>
<dbReference type="EMBL" id="AM167904">
    <property type="protein sequence ID" value="CAJ49957.1"/>
    <property type="molecule type" value="Genomic_DNA"/>
</dbReference>
<dbReference type="RefSeq" id="WP_012418008.1">
    <property type="nucleotide sequence ID" value="NC_010645.1"/>
</dbReference>
<dbReference type="SMR" id="Q2KY86"/>
<dbReference type="STRING" id="360910.BAV2347"/>
<dbReference type="GeneID" id="92934476"/>
<dbReference type="KEGG" id="bav:BAV2347"/>
<dbReference type="eggNOG" id="COG0105">
    <property type="taxonomic scope" value="Bacteria"/>
</dbReference>
<dbReference type="HOGENOM" id="CLU_060216_8_1_4"/>
<dbReference type="OrthoDB" id="9801161at2"/>
<dbReference type="Proteomes" id="UP000001977">
    <property type="component" value="Chromosome"/>
</dbReference>
<dbReference type="GO" id="GO:0005737">
    <property type="term" value="C:cytoplasm"/>
    <property type="evidence" value="ECO:0007669"/>
    <property type="project" value="UniProtKB-SubCell"/>
</dbReference>
<dbReference type="GO" id="GO:0005524">
    <property type="term" value="F:ATP binding"/>
    <property type="evidence" value="ECO:0007669"/>
    <property type="project" value="UniProtKB-UniRule"/>
</dbReference>
<dbReference type="GO" id="GO:0046872">
    <property type="term" value="F:metal ion binding"/>
    <property type="evidence" value="ECO:0007669"/>
    <property type="project" value="UniProtKB-KW"/>
</dbReference>
<dbReference type="GO" id="GO:0004550">
    <property type="term" value="F:nucleoside diphosphate kinase activity"/>
    <property type="evidence" value="ECO:0007669"/>
    <property type="project" value="UniProtKB-UniRule"/>
</dbReference>
<dbReference type="GO" id="GO:0006241">
    <property type="term" value="P:CTP biosynthetic process"/>
    <property type="evidence" value="ECO:0007669"/>
    <property type="project" value="UniProtKB-UniRule"/>
</dbReference>
<dbReference type="GO" id="GO:0006183">
    <property type="term" value="P:GTP biosynthetic process"/>
    <property type="evidence" value="ECO:0007669"/>
    <property type="project" value="UniProtKB-UniRule"/>
</dbReference>
<dbReference type="GO" id="GO:0006228">
    <property type="term" value="P:UTP biosynthetic process"/>
    <property type="evidence" value="ECO:0007669"/>
    <property type="project" value="UniProtKB-UniRule"/>
</dbReference>
<dbReference type="CDD" id="cd04413">
    <property type="entry name" value="NDPk_I"/>
    <property type="match status" value="1"/>
</dbReference>
<dbReference type="FunFam" id="3.30.70.141:FF:000001">
    <property type="entry name" value="Nucleoside diphosphate kinase"/>
    <property type="match status" value="1"/>
</dbReference>
<dbReference type="Gene3D" id="3.30.70.141">
    <property type="entry name" value="Nucleoside diphosphate kinase-like domain"/>
    <property type="match status" value="1"/>
</dbReference>
<dbReference type="HAMAP" id="MF_00451">
    <property type="entry name" value="NDP_kinase"/>
    <property type="match status" value="1"/>
</dbReference>
<dbReference type="InterPro" id="IPR034907">
    <property type="entry name" value="NDK-like_dom"/>
</dbReference>
<dbReference type="InterPro" id="IPR036850">
    <property type="entry name" value="NDK-like_dom_sf"/>
</dbReference>
<dbReference type="InterPro" id="IPR001564">
    <property type="entry name" value="Nucleoside_diP_kinase"/>
</dbReference>
<dbReference type="InterPro" id="IPR023005">
    <property type="entry name" value="Nucleoside_diP_kinase_AS"/>
</dbReference>
<dbReference type="NCBIfam" id="NF001908">
    <property type="entry name" value="PRK00668.1"/>
    <property type="match status" value="1"/>
</dbReference>
<dbReference type="PANTHER" id="PTHR46161">
    <property type="entry name" value="NUCLEOSIDE DIPHOSPHATE KINASE"/>
    <property type="match status" value="1"/>
</dbReference>
<dbReference type="PANTHER" id="PTHR46161:SF3">
    <property type="entry name" value="NUCLEOSIDE DIPHOSPHATE KINASE DDB_G0292928-RELATED"/>
    <property type="match status" value="1"/>
</dbReference>
<dbReference type="Pfam" id="PF00334">
    <property type="entry name" value="NDK"/>
    <property type="match status" value="1"/>
</dbReference>
<dbReference type="PRINTS" id="PR01243">
    <property type="entry name" value="NUCDPKINASE"/>
</dbReference>
<dbReference type="SMART" id="SM00562">
    <property type="entry name" value="NDK"/>
    <property type="match status" value="1"/>
</dbReference>
<dbReference type="SUPFAM" id="SSF54919">
    <property type="entry name" value="Nucleoside diphosphate kinase, NDK"/>
    <property type="match status" value="1"/>
</dbReference>
<dbReference type="PROSITE" id="PS00469">
    <property type="entry name" value="NDPK"/>
    <property type="match status" value="1"/>
</dbReference>
<dbReference type="PROSITE" id="PS51374">
    <property type="entry name" value="NDPK_LIKE"/>
    <property type="match status" value="1"/>
</dbReference>